<dbReference type="EMBL" id="D14567">
    <property type="protein sequence ID" value="BAA03421.1"/>
    <property type="molecule type" value="Genomic_DNA"/>
</dbReference>
<dbReference type="SMR" id="P47907"/>
<dbReference type="GO" id="GO:0005739">
    <property type="term" value="C:mitochondrion"/>
    <property type="evidence" value="ECO:0007669"/>
    <property type="project" value="UniProtKB-SubCell"/>
</dbReference>
<dbReference type="GO" id="GO:1990904">
    <property type="term" value="C:ribonucleoprotein complex"/>
    <property type="evidence" value="ECO:0007669"/>
    <property type="project" value="UniProtKB-KW"/>
</dbReference>
<dbReference type="GO" id="GO:0005840">
    <property type="term" value="C:ribosome"/>
    <property type="evidence" value="ECO:0007669"/>
    <property type="project" value="UniProtKB-KW"/>
</dbReference>
<dbReference type="GO" id="GO:0003735">
    <property type="term" value="F:structural constituent of ribosome"/>
    <property type="evidence" value="ECO:0007669"/>
    <property type="project" value="InterPro"/>
</dbReference>
<dbReference type="GO" id="GO:0006412">
    <property type="term" value="P:translation"/>
    <property type="evidence" value="ECO:0007669"/>
    <property type="project" value="InterPro"/>
</dbReference>
<dbReference type="InterPro" id="IPR007980">
    <property type="entry name" value="Ribosomal_uS3m_fun"/>
</dbReference>
<dbReference type="Pfam" id="PF05316">
    <property type="entry name" value="VAR1"/>
    <property type="match status" value="1"/>
</dbReference>
<keyword id="KW-0496">Mitochondrion</keyword>
<keyword id="KW-0687">Ribonucleoprotein</keyword>
<keyword id="KW-0689">Ribosomal protein</keyword>
<comment type="function">
    <text evidence="1">Essential for mitochondrial protein synthesis and required for the maturation of small ribosomal subunits.</text>
</comment>
<comment type="subcellular location">
    <subcellularLocation>
        <location>Mitochondrion</location>
    </subcellularLocation>
</comment>
<comment type="similarity">
    <text evidence="2">Belongs to the universal ribosomal protein uS3 family.</text>
</comment>
<name>RMS5_PENUR</name>
<accession>P47907</accession>
<organism>
    <name type="scientific">Penicillium urticae</name>
    <dbReference type="NCBI Taxonomy" id="29844"/>
    <lineage>
        <taxon>Eukaryota</taxon>
        <taxon>Fungi</taxon>
        <taxon>Dikarya</taxon>
        <taxon>Ascomycota</taxon>
        <taxon>Pezizomycotina</taxon>
        <taxon>Eurotiomycetes</taxon>
        <taxon>Eurotiomycetidae</taxon>
        <taxon>Eurotiales</taxon>
        <taxon>Aspergillaceae</taxon>
        <taxon>Penicillium</taxon>
    </lineage>
</organism>
<feature type="chain" id="PRO_0000220079" description="Small ribosomal subunit protein uS3m">
    <location>
        <begin position="1"/>
        <end position="399"/>
    </location>
</feature>
<protein>
    <recommendedName>
        <fullName evidence="2">Small ribosomal subunit protein uS3m</fullName>
    </recommendedName>
    <alternativeName>
        <fullName>Ribosomal protein S5, mitochondrial</fullName>
    </alternativeName>
</protein>
<proteinExistence type="inferred from homology"/>
<reference key="1">
    <citation type="journal article" date="1995" name="J. Biochem.">
        <title>Nucleotide sequence and characterization of the large mitochondrial rRNA gene of Penicillium urticae, and its comparison with those of other filamentous fungi.</title>
        <authorList>
            <person name="Yamamoto H."/>
            <person name="Naruse A."/>
            <person name="Ohsaki T."/>
            <person name="Sekiguchi J."/>
        </authorList>
    </citation>
    <scope>NUCLEOTIDE SEQUENCE [GENOMIC DNA]</scope>
    <source>
        <strain>NRRL 2159A</strain>
    </source>
</reference>
<geneLocation type="mitochondrion"/>
<sequence length="399" mass="47447">MLNIIKSKLNTTYKKKGLNDSSIAIYNRDVIPAVRNWKSSIYAYNKNAINLIPIKSKYVMKLIKAYFNLYNLQLESLLRKNRLRRRFRKISTNRIFISDGEFKHTNDKVNITLYVYNKQKLNYLLKLKKRYLTLFKKAKFARKLKLIKNVGLNILCKHKQKSILLSNLLPKYNTQVNTAQNIYYTRFIKKSFKRLKFYMYYKQMLYINKAKFENTYLQGLINLVRNIFNKNVEFNIINLKYFYFNSKIFTQPLELKLKKKRNVLRYLKVLIRKAKIKNVKLAEKSKKFFNFNIFNSDNFLQQDNTKSKYLKKIILSNLKYKRVSGVRLEAAGRLTRRFSASRSQRRTKYKGNLENVYSSFKGYPTPVLRGNDKANLQYTVINSTSRVGAFGVKGWISST</sequence>
<evidence type="ECO:0000250" key="1"/>
<evidence type="ECO:0000305" key="2"/>